<name>3S11_HYDCY</name>
<comment type="function">
    <text evidence="2">Binds to muscle nicotinic acetylcholine receptor (nAChR) and inhibit acetylcholine from binding to the receptor, thereby impairing neuromuscular transmission.</text>
</comment>
<comment type="subcellular location">
    <subcellularLocation>
        <location evidence="3">Secreted</location>
    </subcellularLocation>
</comment>
<comment type="tissue specificity">
    <text evidence="4">Expressed by the venom gland.</text>
</comment>
<comment type="similarity">
    <text evidence="4">Belongs to the three-finger toxin family. Short-chain subfamily. Type I alpha-neurotoxin sub-subfamily.</text>
</comment>
<protein>
    <recommendedName>
        <fullName>Short neurotoxin 1</fullName>
    </recommendedName>
    <alternativeName>
        <fullName>Hydrophitoxin a</fullName>
    </alternativeName>
</protein>
<feature type="chain" id="PRO_0000093577" description="Short neurotoxin 1" evidence="3">
    <location>
        <begin position="1"/>
        <end position="60"/>
    </location>
</feature>
<feature type="disulfide bond" evidence="1">
    <location>
        <begin position="3"/>
        <end position="22"/>
    </location>
</feature>
<feature type="disulfide bond" evidence="1">
    <location>
        <begin position="17"/>
        <end position="39"/>
    </location>
</feature>
<feature type="disulfide bond" evidence="1">
    <location>
        <begin position="41"/>
        <end position="52"/>
    </location>
</feature>
<feature type="disulfide bond" evidence="1">
    <location>
        <begin position="53"/>
        <end position="58"/>
    </location>
</feature>
<evidence type="ECO:0000250" key="1">
    <source>
        <dbReference type="UniProtKB" id="P0C1Z0"/>
    </source>
</evidence>
<evidence type="ECO:0000250" key="2">
    <source>
        <dbReference type="UniProtKB" id="P60775"/>
    </source>
</evidence>
<evidence type="ECO:0000269" key="3">
    <source>
    </source>
</evidence>
<evidence type="ECO:0000305" key="4"/>
<proteinExistence type="evidence at protein level"/>
<reference key="1">
    <citation type="journal article" date="1974" name="Toxicon">
        <title>Hydrophitoxin b from Hydrophis cyanocinctus venom.</title>
        <authorList>
            <person name="Lui C.-S."/>
            <person name="Blackwell R.Q."/>
        </authorList>
    </citation>
    <scope>PROTEIN SEQUENCE</scope>
    <scope>SUBCELLULAR LOCATION</scope>
    <source>
        <tissue>Venom</tissue>
    </source>
</reference>
<keyword id="KW-0008">Acetylcholine receptor inhibiting toxin</keyword>
<keyword id="KW-0903">Direct protein sequencing</keyword>
<keyword id="KW-1015">Disulfide bond</keyword>
<keyword id="KW-0872">Ion channel impairing toxin</keyword>
<keyword id="KW-0528">Neurotoxin</keyword>
<keyword id="KW-0629">Postsynaptic neurotoxin</keyword>
<keyword id="KW-0964">Secreted</keyword>
<keyword id="KW-0800">Toxin</keyword>
<sequence>MTCCNQQSSQPKTTTNCAESSCYKKTWSDHRGTRIERGCGCPQVKKGIKLECCHTNECNN</sequence>
<accession>P25494</accession>
<organism>
    <name type="scientific">Hydrophis cyanocinctus</name>
    <name type="common">Asian annulated sea snake</name>
    <name type="synonym">Leioselasma cyanocincta</name>
    <dbReference type="NCBI Taxonomy" id="8686"/>
    <lineage>
        <taxon>Eukaryota</taxon>
        <taxon>Metazoa</taxon>
        <taxon>Chordata</taxon>
        <taxon>Craniata</taxon>
        <taxon>Vertebrata</taxon>
        <taxon>Euteleostomi</taxon>
        <taxon>Lepidosauria</taxon>
        <taxon>Squamata</taxon>
        <taxon>Bifurcata</taxon>
        <taxon>Unidentata</taxon>
        <taxon>Episquamata</taxon>
        <taxon>Toxicofera</taxon>
        <taxon>Serpentes</taxon>
        <taxon>Colubroidea</taxon>
        <taxon>Elapidae</taxon>
        <taxon>Hydrophiinae</taxon>
        <taxon>Hydrophis</taxon>
    </lineage>
</organism>
<dbReference type="SMR" id="P25494"/>
<dbReference type="GO" id="GO:0005576">
    <property type="term" value="C:extracellular region"/>
    <property type="evidence" value="ECO:0007669"/>
    <property type="project" value="UniProtKB-SubCell"/>
</dbReference>
<dbReference type="GO" id="GO:0030550">
    <property type="term" value="F:acetylcholine receptor inhibitor activity"/>
    <property type="evidence" value="ECO:0007669"/>
    <property type="project" value="UniProtKB-KW"/>
</dbReference>
<dbReference type="GO" id="GO:0099106">
    <property type="term" value="F:ion channel regulator activity"/>
    <property type="evidence" value="ECO:0007669"/>
    <property type="project" value="UniProtKB-KW"/>
</dbReference>
<dbReference type="GO" id="GO:0090729">
    <property type="term" value="F:toxin activity"/>
    <property type="evidence" value="ECO:0007669"/>
    <property type="project" value="UniProtKB-KW"/>
</dbReference>
<dbReference type="CDD" id="cd00206">
    <property type="entry name" value="TFP_snake_toxin"/>
    <property type="match status" value="1"/>
</dbReference>
<dbReference type="Gene3D" id="2.10.60.10">
    <property type="entry name" value="CD59"/>
    <property type="match status" value="1"/>
</dbReference>
<dbReference type="InterPro" id="IPR003571">
    <property type="entry name" value="Snake_3FTx"/>
</dbReference>
<dbReference type="InterPro" id="IPR045860">
    <property type="entry name" value="Snake_toxin-like_sf"/>
</dbReference>
<dbReference type="InterPro" id="IPR018354">
    <property type="entry name" value="Snake_toxin_con_site"/>
</dbReference>
<dbReference type="InterPro" id="IPR054131">
    <property type="entry name" value="Toxin_cobra-type"/>
</dbReference>
<dbReference type="Pfam" id="PF21947">
    <property type="entry name" value="Toxin_cobra-type"/>
    <property type="match status" value="1"/>
</dbReference>
<dbReference type="SUPFAM" id="SSF57302">
    <property type="entry name" value="Snake toxin-like"/>
    <property type="match status" value="1"/>
</dbReference>
<dbReference type="PROSITE" id="PS00272">
    <property type="entry name" value="SNAKE_TOXIN"/>
    <property type="match status" value="1"/>
</dbReference>